<organism>
    <name type="scientific">Salmonella typhimurium (strain LT2 / SGSC1412 / ATCC 700720)</name>
    <dbReference type="NCBI Taxonomy" id="99287"/>
    <lineage>
        <taxon>Bacteria</taxon>
        <taxon>Pseudomonadati</taxon>
        <taxon>Pseudomonadota</taxon>
        <taxon>Gammaproteobacteria</taxon>
        <taxon>Enterobacterales</taxon>
        <taxon>Enterobacteriaceae</taxon>
        <taxon>Salmonella</taxon>
    </lineage>
</organism>
<accession>P16657</accession>
<keyword id="KW-0046">Antibiotic resistance</keyword>
<keyword id="KW-0093">Biotin biosynthesis</keyword>
<keyword id="KW-0903">Direct protein sequencing</keyword>
<keyword id="KW-0275">Fatty acid biosynthesis</keyword>
<keyword id="KW-0276">Fatty acid metabolism</keyword>
<keyword id="KW-0444">Lipid biosynthesis</keyword>
<keyword id="KW-0443">Lipid metabolism</keyword>
<keyword id="KW-0520">NAD</keyword>
<keyword id="KW-0560">Oxidoreductase</keyword>
<keyword id="KW-1185">Reference proteome</keyword>
<gene>
    <name type="primary">fabI</name>
    <name type="synonym">envM</name>
    <name type="ordered locus">STM1700</name>
</gene>
<reference key="1">
    <citation type="journal article" date="1989" name="J. Bacteriol.">
        <title>envM genes of Salmonella typhimurium and Escherichia coli.</title>
        <authorList>
            <person name="Turnowsky F."/>
            <person name="Fuchs K."/>
            <person name="Jeschek C."/>
            <person name="Hoegenauer G."/>
        </authorList>
    </citation>
    <scope>NUCLEOTIDE SEQUENCE [GENOMIC DNA]</scope>
    <scope>MUTAGENESIS OF GLY-93</scope>
    <source>
        <strain>AG701</strain>
    </source>
</reference>
<reference key="2">
    <citation type="journal article" date="2001" name="Nature">
        <title>Complete genome sequence of Salmonella enterica serovar Typhimurium LT2.</title>
        <authorList>
            <person name="McClelland M."/>
            <person name="Sanderson K.E."/>
            <person name="Spieth J."/>
            <person name="Clifton S.W."/>
            <person name="Latreille P."/>
            <person name="Courtney L."/>
            <person name="Porwollik S."/>
            <person name="Ali J."/>
            <person name="Dante M."/>
            <person name="Du F."/>
            <person name="Hou S."/>
            <person name="Layman D."/>
            <person name="Leonard S."/>
            <person name="Nguyen C."/>
            <person name="Scott K."/>
            <person name="Holmes A."/>
            <person name="Grewal N."/>
            <person name="Mulvaney E."/>
            <person name="Ryan E."/>
            <person name="Sun H."/>
            <person name="Florea L."/>
            <person name="Miller W."/>
            <person name="Stoneking T."/>
            <person name="Nhan M."/>
            <person name="Waterston R."/>
            <person name="Wilson R.K."/>
        </authorList>
    </citation>
    <scope>NUCLEOTIDE SEQUENCE [LARGE SCALE GENOMIC DNA]</scope>
    <source>
        <strain>LT2 / SGSC1412 / ATCC 700720</strain>
    </source>
</reference>
<reference key="3">
    <citation type="journal article" date="1995" name="Mol. Microbiol.">
        <title>Salmonella typhimurium responses to a bactericidal protein from human neutrophils.</title>
        <authorList>
            <person name="Qi S.Y."/>
            <person name="Li Y."/>
            <person name="Szyroki A."/>
            <person name="Giles I.G."/>
            <person name="Moir A."/>
            <person name="O'Connor C.D."/>
        </authorList>
    </citation>
    <scope>PROTEIN SEQUENCE OF 2-11</scope>
    <source>
        <strain>SL1344</strain>
    </source>
</reference>
<feature type="initiator methionine" description="Removed" evidence="3">
    <location>
        <position position="1"/>
    </location>
</feature>
<feature type="chain" id="PRO_0000054910" description="Enoyl-[acyl-carrier-protein] reductase [NADH] FabI">
    <location>
        <begin position="2"/>
        <end position="262"/>
    </location>
</feature>
<feature type="active site" description="Proton acceptor" evidence="1">
    <location>
        <position position="146"/>
    </location>
</feature>
<feature type="active site" description="Proton acceptor" evidence="1">
    <location>
        <position position="156"/>
    </location>
</feature>
<feature type="binding site" evidence="1">
    <location>
        <position position="13"/>
    </location>
    <ligand>
        <name>NAD(+)</name>
        <dbReference type="ChEBI" id="CHEBI:57540"/>
    </ligand>
</feature>
<feature type="binding site" evidence="1">
    <location>
        <begin position="19"/>
        <end position="20"/>
    </location>
    <ligand>
        <name>NAD(+)</name>
        <dbReference type="ChEBI" id="CHEBI:57540"/>
    </ligand>
</feature>
<feature type="binding site" evidence="1">
    <location>
        <position position="40"/>
    </location>
    <ligand>
        <name>NAD(+)</name>
        <dbReference type="ChEBI" id="CHEBI:57540"/>
    </ligand>
</feature>
<feature type="binding site" evidence="1">
    <location>
        <begin position="64"/>
        <end position="65"/>
    </location>
    <ligand>
        <name>NAD(+)</name>
        <dbReference type="ChEBI" id="CHEBI:57540"/>
    </ligand>
</feature>
<feature type="binding site" evidence="1">
    <location>
        <position position="92"/>
    </location>
    <ligand>
        <name>NAD(+)</name>
        <dbReference type="ChEBI" id="CHEBI:57540"/>
    </ligand>
</feature>
<feature type="binding site" evidence="1">
    <location>
        <position position="95"/>
    </location>
    <ligand>
        <name>substrate</name>
    </ligand>
</feature>
<feature type="binding site" evidence="1">
    <location>
        <position position="163"/>
    </location>
    <ligand>
        <name>NAD(+)</name>
        <dbReference type="ChEBI" id="CHEBI:57540"/>
    </ligand>
</feature>
<feature type="binding site" evidence="1">
    <location>
        <begin position="192"/>
        <end position="196"/>
    </location>
    <ligand>
        <name>NAD(+)</name>
        <dbReference type="ChEBI" id="CHEBI:57540"/>
    </ligand>
</feature>
<feature type="site" description="Involved in acyl-ACP binding" evidence="1">
    <location>
        <position position="201"/>
    </location>
</feature>
<feature type="site" description="Involved in acyl-ACP binding" evidence="1">
    <location>
        <position position="204"/>
    </location>
</feature>
<feature type="site" description="Involved in acyl-ACP binding" evidence="1">
    <location>
        <position position="205"/>
    </location>
</feature>
<feature type="mutagenesis site" description="Diazaborine resistance." evidence="2">
    <original>G</original>
    <variation>S</variation>
    <location>
        <position position="93"/>
    </location>
</feature>
<proteinExistence type="evidence at protein level"/>
<comment type="function">
    <text evidence="1">Catalyzes the reduction of a carbon-carbon double bond in an enoyl moiety that is covalently linked to an acyl carrier protein (ACP). Involved in the elongation cycle of fatty acid which are used in the lipid metabolism and in the biotin biosynthesis (By similarity).</text>
</comment>
<comment type="catalytic activity">
    <reaction>
        <text>a 2,3-saturated acyl-[ACP] + NAD(+) = a (2E)-enoyl-[ACP] + NADH + H(+)</text>
        <dbReference type="Rhea" id="RHEA:10240"/>
        <dbReference type="Rhea" id="RHEA-COMP:9925"/>
        <dbReference type="Rhea" id="RHEA-COMP:9926"/>
        <dbReference type="ChEBI" id="CHEBI:15378"/>
        <dbReference type="ChEBI" id="CHEBI:57540"/>
        <dbReference type="ChEBI" id="CHEBI:57945"/>
        <dbReference type="ChEBI" id="CHEBI:78784"/>
        <dbReference type="ChEBI" id="CHEBI:78785"/>
        <dbReference type="EC" id="1.3.1.9"/>
    </reaction>
</comment>
<comment type="pathway">
    <text>Lipid metabolism; fatty acid biosynthesis.</text>
</comment>
<comment type="pathway">
    <text>Cofactor biosynthesis; biotin biosynthesis.</text>
</comment>
<comment type="subunit">
    <text evidence="1">Homotetramer.</text>
</comment>
<comment type="miscellaneous">
    <text>The antibiotic diazaborine interferes with the activity by binding to the protein.</text>
</comment>
<comment type="similarity">
    <text evidence="4">Belongs to the short-chain dehydrogenases/reductases (SDR) family. FabI subfamily.</text>
</comment>
<dbReference type="EC" id="1.3.1.9"/>
<dbReference type="EMBL" id="M31806">
    <property type="protein sequence ID" value="AAA27059.1"/>
    <property type="molecule type" value="Genomic_DNA"/>
</dbReference>
<dbReference type="EMBL" id="AE006468">
    <property type="protein sequence ID" value="AAL20618.1"/>
    <property type="molecule type" value="Genomic_DNA"/>
</dbReference>
<dbReference type="PIR" id="B43729">
    <property type="entry name" value="B43729"/>
</dbReference>
<dbReference type="RefSeq" id="NP_460659.1">
    <property type="nucleotide sequence ID" value="NC_003197.2"/>
</dbReference>
<dbReference type="RefSeq" id="WP_000506505.1">
    <property type="nucleotide sequence ID" value="NC_003197.2"/>
</dbReference>
<dbReference type="SMR" id="P16657"/>
<dbReference type="STRING" id="99287.STM1700"/>
<dbReference type="PaxDb" id="99287-STM1700"/>
<dbReference type="GeneID" id="1253219"/>
<dbReference type="KEGG" id="stm:STM1700"/>
<dbReference type="PATRIC" id="fig|99287.12.peg.1794"/>
<dbReference type="HOGENOM" id="CLU_010194_10_1_6"/>
<dbReference type="OMA" id="GILDMIH"/>
<dbReference type="PhylomeDB" id="P16657"/>
<dbReference type="BioCyc" id="SENT99287:STM1700-MONOMER"/>
<dbReference type="UniPathway" id="UPA00078"/>
<dbReference type="UniPathway" id="UPA00094"/>
<dbReference type="Proteomes" id="UP000001014">
    <property type="component" value="Chromosome"/>
</dbReference>
<dbReference type="GO" id="GO:0004318">
    <property type="term" value="F:enoyl-[acyl-carrier-protein] reductase (NADH) activity"/>
    <property type="evidence" value="ECO:0000250"/>
    <property type="project" value="UniProtKB"/>
</dbReference>
<dbReference type="GO" id="GO:0042802">
    <property type="term" value="F:identical protein binding"/>
    <property type="evidence" value="ECO:0000250"/>
    <property type="project" value="UniProtKB"/>
</dbReference>
<dbReference type="GO" id="GO:0009102">
    <property type="term" value="P:biotin biosynthetic process"/>
    <property type="evidence" value="ECO:0000250"/>
    <property type="project" value="UniProtKB"/>
</dbReference>
<dbReference type="GO" id="GO:0030497">
    <property type="term" value="P:fatty acid elongation"/>
    <property type="evidence" value="ECO:0000250"/>
    <property type="project" value="UniProtKB"/>
</dbReference>
<dbReference type="GO" id="GO:0046677">
    <property type="term" value="P:response to antibiotic"/>
    <property type="evidence" value="ECO:0007669"/>
    <property type="project" value="UniProtKB-KW"/>
</dbReference>
<dbReference type="CDD" id="cd05372">
    <property type="entry name" value="ENR_SDR"/>
    <property type="match status" value="1"/>
</dbReference>
<dbReference type="FunFam" id="3.40.50.720:FF:000054">
    <property type="entry name" value="Enoyl-[acyl-carrier-protein] reductase [NADH]"/>
    <property type="match status" value="1"/>
</dbReference>
<dbReference type="Gene3D" id="3.40.50.720">
    <property type="entry name" value="NAD(P)-binding Rossmann-like Domain"/>
    <property type="match status" value="1"/>
</dbReference>
<dbReference type="InterPro" id="IPR014358">
    <property type="entry name" value="Enoyl-ACP_Rdtase_NADH"/>
</dbReference>
<dbReference type="InterPro" id="IPR036291">
    <property type="entry name" value="NAD(P)-bd_dom_sf"/>
</dbReference>
<dbReference type="InterPro" id="IPR002347">
    <property type="entry name" value="SDR_fam"/>
</dbReference>
<dbReference type="NCBIfam" id="NF005938">
    <property type="entry name" value="PRK07984.1"/>
    <property type="match status" value="1"/>
</dbReference>
<dbReference type="PANTHER" id="PTHR43159">
    <property type="entry name" value="ENOYL-[ACYL-CARRIER-PROTEIN] REDUCTASE"/>
    <property type="match status" value="1"/>
</dbReference>
<dbReference type="PANTHER" id="PTHR43159:SF2">
    <property type="entry name" value="ENOYL-[ACYL-CARRIER-PROTEIN] REDUCTASE [NADH], CHLOROPLASTIC"/>
    <property type="match status" value="1"/>
</dbReference>
<dbReference type="Pfam" id="PF13561">
    <property type="entry name" value="adh_short_C2"/>
    <property type="match status" value="1"/>
</dbReference>
<dbReference type="PIRSF" id="PIRSF000094">
    <property type="entry name" value="Enoyl-ACP_rdct"/>
    <property type="match status" value="1"/>
</dbReference>
<dbReference type="PRINTS" id="PR00081">
    <property type="entry name" value="GDHRDH"/>
</dbReference>
<dbReference type="SUPFAM" id="SSF51735">
    <property type="entry name" value="NAD(P)-binding Rossmann-fold domains"/>
    <property type="match status" value="1"/>
</dbReference>
<evidence type="ECO:0000250" key="1"/>
<evidence type="ECO:0000269" key="2">
    <source>
    </source>
</evidence>
<evidence type="ECO:0000269" key="3">
    <source>
    </source>
</evidence>
<evidence type="ECO:0000305" key="4"/>
<sequence length="262" mass="27761">MGFLSGKRILVTGVASKLSIAYGIAQAMHREGAELAFTYQNDKLKGRVEEFAAQLGSSIVLPCDVAEDASIDAMFAELGNVWPKFDGFVHSIGFAPGDQLDGDYVNAVTREGFKVAHDISSYSFVAMAKACRTMLNPGSALLTLSYLGAERAIPNYNVMGLAKASLEANVRYMANAMGPEGVRVNAISAGPIRTLAASGIKDFRKMLAHCEAVTPIRRTVTIEDVGNSAAFLCSDLSAGISGEVVHVDGGFSIAAMNELELK</sequence>
<protein>
    <recommendedName>
        <fullName>Enoyl-[acyl-carrier-protein] reductase [NADH] FabI</fullName>
        <shortName>ENR</shortName>
        <ecNumber>1.3.1.9</ecNumber>
    </recommendedName>
    <alternativeName>
        <fullName>NADH-dependent enoyl-ACP reductase</fullName>
    </alternativeName>
</protein>
<name>FABI_SALTY</name>